<accession>P9WKI9</accession>
<accession>L0TC07</accession>
<accession>O07203</accession>
<accession>P65165</accession>
<gene>
    <name type="primary">suhB</name>
    <name type="ordered locus">Rv2701c</name>
    <name type="ORF">MTCY05A6.22c</name>
</gene>
<organism>
    <name type="scientific">Mycobacterium tuberculosis (strain ATCC 25618 / H37Rv)</name>
    <dbReference type="NCBI Taxonomy" id="83332"/>
    <lineage>
        <taxon>Bacteria</taxon>
        <taxon>Bacillati</taxon>
        <taxon>Actinomycetota</taxon>
        <taxon>Actinomycetes</taxon>
        <taxon>Mycobacteriales</taxon>
        <taxon>Mycobacteriaceae</taxon>
        <taxon>Mycobacterium</taxon>
        <taxon>Mycobacterium tuberculosis complex</taxon>
    </lineage>
</organism>
<comment type="function">
    <text evidence="2">Catalyzes the dephosphorylation of inositol 1-phosphate (I-1-P) to yield free myo-inositol, a key metabolite in mycobacteria. Is also able to hydrolyze a variety of polyol phosphates such as glucitol-6-phosphate, inositol 2-phosphate (I-2-P), glycerol-2-phosphate, and 2'-AMP, albeit with reduced efficiency.</text>
</comment>
<comment type="catalytic activity">
    <reaction evidence="2">
        <text>a myo-inositol phosphate + H2O = myo-inositol + phosphate</text>
        <dbReference type="Rhea" id="RHEA:24056"/>
        <dbReference type="ChEBI" id="CHEBI:15377"/>
        <dbReference type="ChEBI" id="CHEBI:17268"/>
        <dbReference type="ChEBI" id="CHEBI:43474"/>
        <dbReference type="ChEBI" id="CHEBI:84139"/>
        <dbReference type="EC" id="3.1.3.25"/>
    </reaction>
</comment>
<comment type="cofactor">
    <cofactor evidence="2">
        <name>Mg(2+)</name>
        <dbReference type="ChEBI" id="CHEBI:18420"/>
    </cofactor>
    <text evidence="2">Magnesium. Co(2+) and Fe(2+) can replace Mg(2+) but lead to a partial activity (30%), and Mn(2+) leads to a partial activity of 13%.</text>
</comment>
<comment type="activity regulation">
    <text evidence="2">Inhibited by Li(+) with IC50 value of 0.9 mM but not by Na(+) or K(+). Also inhibited by Zn(2+) (IC50 value of 0.5 uM) and by concentrations of Mg(2+) higher than 100 mM.</text>
</comment>
<comment type="biophysicochemical properties">
    <kinetics>
        <KM evidence="2">0.177 mM for inositol-1-phosphate (at pH 8.5 and 37 degrees Celsius)</KM>
        <Vmax evidence="2">7.2 umol/min/mg enzyme with inositol-1-phosphate as substrate (at pH 8.5 and 37 degrees Celsius)</Vmax>
    </kinetics>
    <phDependence>
        <text evidence="2">Optimum pH is 8.5. Exhibits a dramatic drop in activity at low pH, with less than 50% activity remaining at pH 7. In contrast, the activity is extremely stable at alkaline pH, with more than 50% activity remaining at pH 12.</text>
    </phDependence>
    <temperatureDependence>
        <text evidence="2">Optimum temperature is 80 degrees Celsius. Loses 80% activity after a 2 minutes incubation at 70 degrees Celsius.</text>
    </temperatureDependence>
</comment>
<comment type="pathway">
    <text>Polyol metabolism; myo-inositol biosynthesis; myo-inositol from D-glucose 6-phosphate: step 2/2.</text>
</comment>
<comment type="subunit">
    <text evidence="3">Homodimer. Dimerization is induced by Mg(2+) binding.</text>
</comment>
<comment type="induction">
    <text evidence="4">When comparing gene expression levels of the four IMPase family genes in exponential cultures of M.tuberculosis, the level of cysQ is the highest, almost equal to sigA; impA and impC are expressed at approximately 40% of this level, while suhB is lowest, at 12% of the cysQ level.</text>
</comment>
<comment type="disruption phenotype">
    <text evidence="4">Strains lacking this gene show no difference in colony morphology and no differences in levels of phosphatidylinosotol mannosides (PIMs), lipomannan (LM), lipoarabinomannan (LAM) or mycothiol (in the absence of exogenous inositol).</text>
</comment>
<comment type="similarity">
    <text evidence="5">Belongs to the inositol monophosphatase superfamily.</text>
</comment>
<protein>
    <recommendedName>
        <fullName>Inositol-1-monophosphatase SuhB</fullName>
        <shortName>I-1-Pase</shortName>
        <shortName>IMPase</shortName>
        <shortName>Inositol-1-phosphatase</shortName>
        <ecNumber>3.1.3.25</ecNumber>
    </recommendedName>
</protein>
<dbReference type="EC" id="3.1.3.25"/>
<dbReference type="EMBL" id="AL123456">
    <property type="protein sequence ID" value="CCP45499.1"/>
    <property type="molecule type" value="Genomic_DNA"/>
</dbReference>
<dbReference type="PIR" id="H70530">
    <property type="entry name" value="H70530"/>
</dbReference>
<dbReference type="RefSeq" id="NP_217217.1">
    <property type="nucleotide sequence ID" value="NC_000962.3"/>
</dbReference>
<dbReference type="RefSeq" id="WP_003413939.1">
    <property type="nucleotide sequence ID" value="NZ_NVQJ01000017.1"/>
</dbReference>
<dbReference type="PDB" id="2Q74">
    <property type="method" value="X-ray"/>
    <property type="resolution" value="2.60 A"/>
    <property type="chains" value="A/B/C=1-290"/>
</dbReference>
<dbReference type="PDBsum" id="2Q74"/>
<dbReference type="SMR" id="P9WKI9"/>
<dbReference type="FunCoup" id="P9WKI9">
    <property type="interactions" value="339"/>
</dbReference>
<dbReference type="STRING" id="83332.Rv2701c"/>
<dbReference type="iPTMnet" id="P9WKI9"/>
<dbReference type="PaxDb" id="83332-Rv2701c"/>
<dbReference type="DNASU" id="887210"/>
<dbReference type="GeneID" id="45426689"/>
<dbReference type="GeneID" id="887210"/>
<dbReference type="KEGG" id="mtu:Rv2701c"/>
<dbReference type="KEGG" id="mtv:RVBD_2701c"/>
<dbReference type="TubercuList" id="Rv2701c"/>
<dbReference type="eggNOG" id="COG0483">
    <property type="taxonomic scope" value="Bacteria"/>
</dbReference>
<dbReference type="InParanoid" id="P9WKI9"/>
<dbReference type="OrthoDB" id="9772456at2"/>
<dbReference type="PhylomeDB" id="P9WKI9"/>
<dbReference type="UniPathway" id="UPA00823">
    <property type="reaction ID" value="UER00788"/>
</dbReference>
<dbReference type="EvolutionaryTrace" id="P9WKI9"/>
<dbReference type="Proteomes" id="UP000001584">
    <property type="component" value="Chromosome"/>
</dbReference>
<dbReference type="GO" id="GO:0008934">
    <property type="term" value="F:inositol monophosphate 1-phosphatase activity"/>
    <property type="evidence" value="ECO:0000314"/>
    <property type="project" value="MTBBASE"/>
</dbReference>
<dbReference type="GO" id="GO:0000287">
    <property type="term" value="F:magnesium ion binding"/>
    <property type="evidence" value="ECO:0000314"/>
    <property type="project" value="MTBBASE"/>
</dbReference>
<dbReference type="GO" id="GO:0006021">
    <property type="term" value="P:inositol biosynthetic process"/>
    <property type="evidence" value="ECO:0007669"/>
    <property type="project" value="UniProtKB-UniPathway"/>
</dbReference>
<dbReference type="GO" id="GO:0006020">
    <property type="term" value="P:inositol metabolic process"/>
    <property type="evidence" value="ECO:0000318"/>
    <property type="project" value="GO_Central"/>
</dbReference>
<dbReference type="GO" id="GO:0046854">
    <property type="term" value="P:phosphatidylinositol phosphate biosynthetic process"/>
    <property type="evidence" value="ECO:0007669"/>
    <property type="project" value="InterPro"/>
</dbReference>
<dbReference type="GO" id="GO:0007165">
    <property type="term" value="P:signal transduction"/>
    <property type="evidence" value="ECO:0000318"/>
    <property type="project" value="GO_Central"/>
</dbReference>
<dbReference type="CDD" id="cd01639">
    <property type="entry name" value="IMPase"/>
    <property type="match status" value="1"/>
</dbReference>
<dbReference type="FunFam" id="3.40.190.80:FF:000022">
    <property type="entry name" value="Inositol-1-monophosphatase"/>
    <property type="match status" value="1"/>
</dbReference>
<dbReference type="Gene3D" id="3.40.190.80">
    <property type="match status" value="1"/>
</dbReference>
<dbReference type="Gene3D" id="3.30.540.10">
    <property type="entry name" value="Fructose-1,6-Bisphosphatase, subunit A, domain 1"/>
    <property type="match status" value="1"/>
</dbReference>
<dbReference type="InterPro" id="IPR033942">
    <property type="entry name" value="IMPase"/>
</dbReference>
<dbReference type="InterPro" id="IPR020583">
    <property type="entry name" value="Inositol_monoP_metal-BS"/>
</dbReference>
<dbReference type="InterPro" id="IPR000760">
    <property type="entry name" value="Inositol_monophosphatase-like"/>
</dbReference>
<dbReference type="InterPro" id="IPR020550">
    <property type="entry name" value="Inositol_monophosphatase_CS"/>
</dbReference>
<dbReference type="PANTHER" id="PTHR20854">
    <property type="entry name" value="INOSITOL MONOPHOSPHATASE"/>
    <property type="match status" value="1"/>
</dbReference>
<dbReference type="PANTHER" id="PTHR20854:SF4">
    <property type="entry name" value="INOSITOL-1-MONOPHOSPHATASE-RELATED"/>
    <property type="match status" value="1"/>
</dbReference>
<dbReference type="Pfam" id="PF00459">
    <property type="entry name" value="Inositol_P"/>
    <property type="match status" value="1"/>
</dbReference>
<dbReference type="PRINTS" id="PR00377">
    <property type="entry name" value="IMPHPHTASES"/>
</dbReference>
<dbReference type="SUPFAM" id="SSF56655">
    <property type="entry name" value="Carbohydrate phosphatase"/>
    <property type="match status" value="1"/>
</dbReference>
<dbReference type="PROSITE" id="PS00629">
    <property type="entry name" value="IMP_1"/>
    <property type="match status" value="1"/>
</dbReference>
<dbReference type="PROSITE" id="PS00630">
    <property type="entry name" value="IMP_2"/>
    <property type="match status" value="1"/>
</dbReference>
<reference key="1">
    <citation type="journal article" date="1998" name="Nature">
        <title>Deciphering the biology of Mycobacterium tuberculosis from the complete genome sequence.</title>
        <authorList>
            <person name="Cole S.T."/>
            <person name="Brosch R."/>
            <person name="Parkhill J."/>
            <person name="Garnier T."/>
            <person name="Churcher C.M."/>
            <person name="Harris D.E."/>
            <person name="Gordon S.V."/>
            <person name="Eiglmeier K."/>
            <person name="Gas S."/>
            <person name="Barry C.E. III"/>
            <person name="Tekaia F."/>
            <person name="Badcock K."/>
            <person name="Basham D."/>
            <person name="Brown D."/>
            <person name="Chillingworth T."/>
            <person name="Connor R."/>
            <person name="Davies R.M."/>
            <person name="Devlin K."/>
            <person name="Feltwell T."/>
            <person name="Gentles S."/>
            <person name="Hamlin N."/>
            <person name="Holroyd S."/>
            <person name="Hornsby T."/>
            <person name="Jagels K."/>
            <person name="Krogh A."/>
            <person name="McLean J."/>
            <person name="Moule S."/>
            <person name="Murphy L.D."/>
            <person name="Oliver S."/>
            <person name="Osborne J."/>
            <person name="Quail M.A."/>
            <person name="Rajandream M.A."/>
            <person name="Rogers J."/>
            <person name="Rutter S."/>
            <person name="Seeger K."/>
            <person name="Skelton S."/>
            <person name="Squares S."/>
            <person name="Squares R."/>
            <person name="Sulston J.E."/>
            <person name="Taylor K."/>
            <person name="Whitehead S."/>
            <person name="Barrell B.G."/>
        </authorList>
    </citation>
    <scope>NUCLEOTIDE SEQUENCE [LARGE SCALE GENOMIC DNA]</scope>
    <source>
        <strain>ATCC 25618 / H37Rv</strain>
    </source>
</reference>
<reference key="2">
    <citation type="journal article" date="2002" name="Biochemistry">
        <title>Purification and biochemical characterization of Mycobacterium tuberculosis SuhB, an inositol monophosphatase involved in inositol biosynthesis.</title>
        <authorList>
            <person name="Nigou J."/>
            <person name="Dover L.G."/>
            <person name="Besra G.S."/>
        </authorList>
    </citation>
    <scope>FUNCTION</scope>
    <scope>CATALYTIC ACTIVITY</scope>
    <scope>SUBSTRATE SPECIFICITY</scope>
    <scope>COFACTOR</scope>
    <scope>ACTIVITY REGULATION</scope>
    <scope>BIOPHYSICOCHEMICAL PROPERTIES</scope>
    <scope>MUTAGENESIS OF LEU-81; GLU-83; ASP-104; ASP-107; TRP-234 AND ASP-235</scope>
    <source>
        <strain>ATCC 25618 / H37Rv</strain>
    </source>
</reference>
<reference key="3">
    <citation type="journal article" date="2010" name="BMC Microbiol.">
        <title>Inositol monophosphate phosphatase genes of Mycobacterium tuberculosis.</title>
        <authorList>
            <person name="Movahedzadeh F."/>
            <person name="Wheeler P.R."/>
            <person name="Dinadayala P."/>
            <person name="Av-Gay Y."/>
            <person name="Parish T."/>
            <person name="Daffe M."/>
            <person name="Stoker N.G."/>
        </authorList>
    </citation>
    <scope>DISRUPTION PHENOTYPE</scope>
    <scope>INDUCTION</scope>
    <source>
        <strain>ATCC 25618 / H37Rv</strain>
    </source>
</reference>
<reference key="4">
    <citation type="journal article" date="2011" name="Mol. Cell. Proteomics">
        <title>Proteogenomic analysis of Mycobacterium tuberculosis by high resolution mass spectrometry.</title>
        <authorList>
            <person name="Kelkar D.S."/>
            <person name="Kumar D."/>
            <person name="Kumar P."/>
            <person name="Balakrishnan L."/>
            <person name="Muthusamy B."/>
            <person name="Yadav A.K."/>
            <person name="Shrivastava P."/>
            <person name="Marimuthu A."/>
            <person name="Anand S."/>
            <person name="Sundaram H."/>
            <person name="Kingsbury R."/>
            <person name="Harsha H.C."/>
            <person name="Nair B."/>
            <person name="Prasad T.S."/>
            <person name="Chauhan D.S."/>
            <person name="Katoch K."/>
            <person name="Katoch V.M."/>
            <person name="Kumar P."/>
            <person name="Chaerkady R."/>
            <person name="Ramachandran S."/>
            <person name="Dash D."/>
            <person name="Pandey A."/>
        </authorList>
    </citation>
    <scope>ACETYLATION [LARGE SCALE ANALYSIS] AT THR-2</scope>
    <scope>CLEAVAGE OF INITIATOR METHIONINE [LARGE SCALE ANALYSIS]</scope>
    <scope>IDENTIFICATION BY MASS SPECTROMETRY [LARGE SCALE ANALYSIS]</scope>
    <source>
        <strain>ATCC 25618 / H37Rv</strain>
    </source>
</reference>
<reference key="5">
    <citation type="journal article" date="2007" name="BMC Struct. Biol.">
        <title>Dimerization of inositol monophosphatase Mycobacterium tuberculosis SuhB is not constitutive, but induced by binding of the activator Mg2+.</title>
        <authorList>
            <person name="Brown A.K."/>
            <person name="Meng G."/>
            <person name="Ghadbane H."/>
            <person name="Scott D.J."/>
            <person name="Dover L.G."/>
            <person name="Nigou J."/>
            <person name="Besra G.S."/>
            <person name="Futterer K."/>
        </authorList>
    </citation>
    <scope>X-RAY CRYSTALLOGRAPHY (2.6 ANGSTROMS)</scope>
    <scope>SUBUNIT</scope>
    <source>
        <strain>ATCC 25618 / H37Rv</strain>
    </source>
</reference>
<feature type="initiator methionine" description="Removed" evidence="6">
    <location>
        <position position="1"/>
    </location>
</feature>
<feature type="chain" id="PRO_0000142564" description="Inositol-1-monophosphatase SuhB">
    <location>
        <begin position="2"/>
        <end position="290"/>
    </location>
</feature>
<feature type="binding site" evidence="1">
    <location>
        <position position="83"/>
    </location>
    <ligand>
        <name>Mg(2+)</name>
        <dbReference type="ChEBI" id="CHEBI:18420"/>
        <label>1</label>
    </ligand>
</feature>
<feature type="binding site" evidence="1">
    <location>
        <position position="83"/>
    </location>
    <ligand>
        <name>substrate</name>
    </ligand>
</feature>
<feature type="binding site" evidence="1">
    <location>
        <position position="104"/>
    </location>
    <ligand>
        <name>Mg(2+)</name>
        <dbReference type="ChEBI" id="CHEBI:18420"/>
        <label>1</label>
    </ligand>
</feature>
<feature type="binding site" evidence="1">
    <location>
        <position position="104"/>
    </location>
    <ligand>
        <name>Mg(2+)</name>
        <dbReference type="ChEBI" id="CHEBI:18420"/>
        <label>2</label>
    </ligand>
</feature>
<feature type="binding site" evidence="1">
    <location>
        <begin position="106"/>
        <end position="109"/>
    </location>
    <ligand>
        <name>substrate</name>
    </ligand>
</feature>
<feature type="binding site" evidence="1">
    <location>
        <position position="106"/>
    </location>
    <ligand>
        <name>Mg(2+)</name>
        <dbReference type="ChEBI" id="CHEBI:18420"/>
        <label>1</label>
    </ligand>
</feature>
<feature type="binding site" evidence="1">
    <location>
        <position position="107"/>
    </location>
    <ligand>
        <name>Mg(2+)</name>
        <dbReference type="ChEBI" id="CHEBI:18420"/>
        <label>2</label>
    </ligand>
</feature>
<feature type="binding site" evidence="1">
    <location>
        <position position="206"/>
    </location>
    <ligand>
        <name>substrate</name>
    </ligand>
</feature>
<feature type="binding site" evidence="1">
    <location>
        <position position="235"/>
    </location>
    <ligand>
        <name>Mg(2+)</name>
        <dbReference type="ChEBI" id="CHEBI:18420"/>
        <label>2</label>
    </ligand>
</feature>
<feature type="binding site" evidence="1">
    <location>
        <position position="235"/>
    </location>
    <ligand>
        <name>substrate</name>
    </ligand>
</feature>
<feature type="modified residue" description="N-acetylthreonine" evidence="6">
    <location>
        <position position="2"/>
    </location>
</feature>
<feature type="mutagenesis site" description="No effect on activity. 10-fold more resistant to inhibition by Li(+)." evidence="2">
    <original>L</original>
    <variation>A</variation>
    <location>
        <position position="81"/>
    </location>
</feature>
<feature type="mutagenesis site" description="Less than 4% of wild-type activity." evidence="2">
    <original>E</original>
    <variation>D</variation>
    <location>
        <position position="83"/>
    </location>
</feature>
<feature type="mutagenesis site" description="Less than 4% of wild-type activity." evidence="2">
    <original>D</original>
    <variation>N</variation>
    <location>
        <position position="104"/>
    </location>
</feature>
<feature type="mutagenesis site" description="Less than 4% of wild-type activity." evidence="2">
    <original>D</original>
    <variation>N</variation>
    <location>
        <position position="107"/>
    </location>
</feature>
<feature type="mutagenesis site" description="Less than 4% of wild-type activity." evidence="2">
    <original>W</original>
    <variation>L</variation>
    <location>
        <position position="234"/>
    </location>
</feature>
<feature type="mutagenesis site" description="Less than 4% of wild-type activity." evidence="2">
    <original>D</original>
    <variation>N</variation>
    <location>
        <position position="235"/>
    </location>
</feature>
<feature type="helix" evidence="7">
    <location>
        <begin position="8"/>
        <end position="33"/>
    </location>
</feature>
<feature type="helix" evidence="7">
    <location>
        <begin position="55"/>
        <end position="74"/>
    </location>
</feature>
<feature type="strand" evidence="7">
    <location>
        <begin position="100"/>
        <end position="107"/>
    </location>
</feature>
<feature type="helix" evidence="7">
    <location>
        <begin position="109"/>
        <end position="114"/>
    </location>
</feature>
<feature type="strand" evidence="7">
    <location>
        <begin position="120"/>
        <end position="127"/>
    </location>
</feature>
<feature type="strand" evidence="7">
    <location>
        <begin position="130"/>
        <end position="138"/>
    </location>
</feature>
<feature type="turn" evidence="7">
    <location>
        <begin position="139"/>
        <end position="142"/>
    </location>
</feature>
<feature type="strand" evidence="7">
    <location>
        <begin position="143"/>
        <end position="148"/>
    </location>
</feature>
<feature type="turn" evidence="7">
    <location>
        <begin position="149"/>
        <end position="151"/>
    </location>
</feature>
<feature type="strand" evidence="7">
    <location>
        <begin position="152"/>
        <end position="157"/>
    </location>
</feature>
<feature type="strand" evidence="7">
    <location>
        <begin position="160"/>
        <end position="163"/>
    </location>
</feature>
<feature type="helix" evidence="7">
    <location>
        <begin position="172"/>
        <end position="174"/>
    </location>
</feature>
<feature type="strand" evidence="7">
    <location>
        <begin position="176"/>
        <end position="181"/>
    </location>
</feature>
<feature type="strand" evidence="7">
    <location>
        <begin position="183"/>
        <end position="185"/>
    </location>
</feature>
<feature type="helix" evidence="7">
    <location>
        <begin position="188"/>
        <end position="198"/>
    </location>
</feature>
<feature type="helix" evidence="7">
    <location>
        <begin position="199"/>
        <end position="201"/>
    </location>
</feature>
<feature type="strand" evidence="7">
    <location>
        <begin position="202"/>
        <end position="207"/>
    </location>
</feature>
<feature type="helix" evidence="7">
    <location>
        <begin position="211"/>
        <end position="220"/>
    </location>
</feature>
<feature type="strand" evidence="7">
    <location>
        <begin position="224"/>
        <end position="231"/>
    </location>
</feature>
<feature type="helix" evidence="7">
    <location>
        <begin position="233"/>
        <end position="245"/>
    </location>
</feature>
<feature type="strand" evidence="7">
    <location>
        <begin position="249"/>
        <end position="252"/>
    </location>
</feature>
<feature type="strand" evidence="7">
    <location>
        <begin position="262"/>
        <end position="267"/>
    </location>
</feature>
<feature type="helix" evidence="7">
    <location>
        <begin position="269"/>
        <end position="271"/>
    </location>
</feature>
<feature type="helix" evidence="7">
    <location>
        <begin position="272"/>
        <end position="280"/>
    </location>
</feature>
<sequence length="290" mass="30027">MTRPDNEPARLRSVAENLAAEAAAFVRGRRAEVFGISRAGDGDGAVRAKSSPTDPVTVVDTDTERLLRDRLAQLRPGDPILGEEGGGPADVTATPSDRVTWVLDPIDGTVNFVYGIPAYAVSIGAQVGGITVAGAVADVAARTVYSAATGLGAHLTDERGRHVLRCTGVDELSMALLGTGFGYSVRCREKQAELLAHVVPLVRDVRRIGSAALDLCMVAAGRLDAYYEHGVQVWDCAAGALIAAEAGARVLLSTPRAGGAGLVVVAAAPGIADELLAALQRFNGLEPIPD</sequence>
<name>SUHB_MYCTU</name>
<keyword id="KW-0002">3D-structure</keyword>
<keyword id="KW-0007">Acetylation</keyword>
<keyword id="KW-0378">Hydrolase</keyword>
<keyword id="KW-0460">Magnesium</keyword>
<keyword id="KW-0479">Metal-binding</keyword>
<keyword id="KW-1185">Reference proteome</keyword>
<evidence type="ECO:0000250" key="1"/>
<evidence type="ECO:0000269" key="2">
    <source>
    </source>
</evidence>
<evidence type="ECO:0000269" key="3">
    <source>
    </source>
</evidence>
<evidence type="ECO:0000269" key="4">
    <source>
    </source>
</evidence>
<evidence type="ECO:0000305" key="5"/>
<evidence type="ECO:0007744" key="6">
    <source>
    </source>
</evidence>
<evidence type="ECO:0007829" key="7">
    <source>
        <dbReference type="PDB" id="2Q74"/>
    </source>
</evidence>
<proteinExistence type="evidence at protein level"/>